<keyword id="KW-0007">Acetylation</keyword>
<keyword id="KW-0963">Cytoplasm</keyword>
<keyword id="KW-0597">Phosphoprotein</keyword>
<keyword id="KW-1185">Reference proteome</keyword>
<organism>
    <name type="scientific">Mus musculus</name>
    <name type="common">Mouse</name>
    <dbReference type="NCBI Taxonomy" id="10090"/>
    <lineage>
        <taxon>Eukaryota</taxon>
        <taxon>Metazoa</taxon>
        <taxon>Chordata</taxon>
        <taxon>Craniata</taxon>
        <taxon>Vertebrata</taxon>
        <taxon>Euteleostomi</taxon>
        <taxon>Mammalia</taxon>
        <taxon>Eutheria</taxon>
        <taxon>Euarchontoglires</taxon>
        <taxon>Glires</taxon>
        <taxon>Rodentia</taxon>
        <taxon>Myomorpha</taxon>
        <taxon>Muroidea</taxon>
        <taxon>Muridae</taxon>
        <taxon>Murinae</taxon>
        <taxon>Mus</taxon>
        <taxon>Mus</taxon>
    </lineage>
</organism>
<accession>Q9D0R8</accession>
<accession>A2AWS3</accession>
<reference key="1">
    <citation type="journal article" date="2005" name="Science">
        <title>The transcriptional landscape of the mammalian genome.</title>
        <authorList>
            <person name="Carninci P."/>
            <person name="Kasukawa T."/>
            <person name="Katayama S."/>
            <person name="Gough J."/>
            <person name="Frith M.C."/>
            <person name="Maeda N."/>
            <person name="Oyama R."/>
            <person name="Ravasi T."/>
            <person name="Lenhard B."/>
            <person name="Wells C."/>
            <person name="Kodzius R."/>
            <person name="Shimokawa K."/>
            <person name="Bajic V.B."/>
            <person name="Brenner S.E."/>
            <person name="Batalov S."/>
            <person name="Forrest A.R."/>
            <person name="Zavolan M."/>
            <person name="Davis M.J."/>
            <person name="Wilming L.G."/>
            <person name="Aidinis V."/>
            <person name="Allen J.E."/>
            <person name="Ambesi-Impiombato A."/>
            <person name="Apweiler R."/>
            <person name="Aturaliya R.N."/>
            <person name="Bailey T.L."/>
            <person name="Bansal M."/>
            <person name="Baxter L."/>
            <person name="Beisel K.W."/>
            <person name="Bersano T."/>
            <person name="Bono H."/>
            <person name="Chalk A.M."/>
            <person name="Chiu K.P."/>
            <person name="Choudhary V."/>
            <person name="Christoffels A."/>
            <person name="Clutterbuck D.R."/>
            <person name="Crowe M.L."/>
            <person name="Dalla E."/>
            <person name="Dalrymple B.P."/>
            <person name="de Bono B."/>
            <person name="Della Gatta G."/>
            <person name="di Bernardo D."/>
            <person name="Down T."/>
            <person name="Engstrom P."/>
            <person name="Fagiolini M."/>
            <person name="Faulkner G."/>
            <person name="Fletcher C.F."/>
            <person name="Fukushima T."/>
            <person name="Furuno M."/>
            <person name="Futaki S."/>
            <person name="Gariboldi M."/>
            <person name="Georgii-Hemming P."/>
            <person name="Gingeras T.R."/>
            <person name="Gojobori T."/>
            <person name="Green R.E."/>
            <person name="Gustincich S."/>
            <person name="Harbers M."/>
            <person name="Hayashi Y."/>
            <person name="Hensch T.K."/>
            <person name="Hirokawa N."/>
            <person name="Hill D."/>
            <person name="Huminiecki L."/>
            <person name="Iacono M."/>
            <person name="Ikeo K."/>
            <person name="Iwama A."/>
            <person name="Ishikawa T."/>
            <person name="Jakt M."/>
            <person name="Kanapin A."/>
            <person name="Katoh M."/>
            <person name="Kawasawa Y."/>
            <person name="Kelso J."/>
            <person name="Kitamura H."/>
            <person name="Kitano H."/>
            <person name="Kollias G."/>
            <person name="Krishnan S.P."/>
            <person name="Kruger A."/>
            <person name="Kummerfeld S.K."/>
            <person name="Kurochkin I.V."/>
            <person name="Lareau L.F."/>
            <person name="Lazarevic D."/>
            <person name="Lipovich L."/>
            <person name="Liu J."/>
            <person name="Liuni S."/>
            <person name="McWilliam S."/>
            <person name="Madan Babu M."/>
            <person name="Madera M."/>
            <person name="Marchionni L."/>
            <person name="Matsuda H."/>
            <person name="Matsuzawa S."/>
            <person name="Miki H."/>
            <person name="Mignone F."/>
            <person name="Miyake S."/>
            <person name="Morris K."/>
            <person name="Mottagui-Tabar S."/>
            <person name="Mulder N."/>
            <person name="Nakano N."/>
            <person name="Nakauchi H."/>
            <person name="Ng P."/>
            <person name="Nilsson R."/>
            <person name="Nishiguchi S."/>
            <person name="Nishikawa S."/>
            <person name="Nori F."/>
            <person name="Ohara O."/>
            <person name="Okazaki Y."/>
            <person name="Orlando V."/>
            <person name="Pang K.C."/>
            <person name="Pavan W.J."/>
            <person name="Pavesi G."/>
            <person name="Pesole G."/>
            <person name="Petrovsky N."/>
            <person name="Piazza S."/>
            <person name="Reed J."/>
            <person name="Reid J.F."/>
            <person name="Ring B.Z."/>
            <person name="Ringwald M."/>
            <person name="Rost B."/>
            <person name="Ruan Y."/>
            <person name="Salzberg S.L."/>
            <person name="Sandelin A."/>
            <person name="Schneider C."/>
            <person name="Schoenbach C."/>
            <person name="Sekiguchi K."/>
            <person name="Semple C.A."/>
            <person name="Seno S."/>
            <person name="Sessa L."/>
            <person name="Sheng Y."/>
            <person name="Shibata Y."/>
            <person name="Shimada H."/>
            <person name="Shimada K."/>
            <person name="Silva D."/>
            <person name="Sinclair B."/>
            <person name="Sperling S."/>
            <person name="Stupka E."/>
            <person name="Sugiura K."/>
            <person name="Sultana R."/>
            <person name="Takenaka Y."/>
            <person name="Taki K."/>
            <person name="Tammoja K."/>
            <person name="Tan S.L."/>
            <person name="Tang S."/>
            <person name="Taylor M.S."/>
            <person name="Tegner J."/>
            <person name="Teichmann S.A."/>
            <person name="Ueda H.R."/>
            <person name="van Nimwegen E."/>
            <person name="Verardo R."/>
            <person name="Wei C.L."/>
            <person name="Yagi K."/>
            <person name="Yamanishi H."/>
            <person name="Zabarovsky E."/>
            <person name="Zhu S."/>
            <person name="Zimmer A."/>
            <person name="Hide W."/>
            <person name="Bult C."/>
            <person name="Grimmond S.M."/>
            <person name="Teasdale R.D."/>
            <person name="Liu E.T."/>
            <person name="Brusic V."/>
            <person name="Quackenbush J."/>
            <person name="Wahlestedt C."/>
            <person name="Mattick J.S."/>
            <person name="Hume D.A."/>
            <person name="Kai C."/>
            <person name="Sasaki D."/>
            <person name="Tomaru Y."/>
            <person name="Fukuda S."/>
            <person name="Kanamori-Katayama M."/>
            <person name="Suzuki M."/>
            <person name="Aoki J."/>
            <person name="Arakawa T."/>
            <person name="Iida J."/>
            <person name="Imamura K."/>
            <person name="Itoh M."/>
            <person name="Kato T."/>
            <person name="Kawaji H."/>
            <person name="Kawagashira N."/>
            <person name="Kawashima T."/>
            <person name="Kojima M."/>
            <person name="Kondo S."/>
            <person name="Konno H."/>
            <person name="Nakano K."/>
            <person name="Ninomiya N."/>
            <person name="Nishio T."/>
            <person name="Okada M."/>
            <person name="Plessy C."/>
            <person name="Shibata K."/>
            <person name="Shiraki T."/>
            <person name="Suzuki S."/>
            <person name="Tagami M."/>
            <person name="Waki K."/>
            <person name="Watahiki A."/>
            <person name="Okamura-Oho Y."/>
            <person name="Suzuki H."/>
            <person name="Kawai J."/>
            <person name="Hayashizaki Y."/>
        </authorList>
    </citation>
    <scope>NUCLEOTIDE SEQUENCE [LARGE SCALE MRNA]</scope>
    <source>
        <strain>C57BL/6J</strain>
        <tissue>Bone marrow</tissue>
        <tissue>Testis</tissue>
    </source>
</reference>
<reference key="2">
    <citation type="journal article" date="2009" name="PLoS Biol.">
        <title>Lineage-specific biology revealed by a finished genome assembly of the mouse.</title>
        <authorList>
            <person name="Church D.M."/>
            <person name="Goodstadt L."/>
            <person name="Hillier L.W."/>
            <person name="Zody M.C."/>
            <person name="Goldstein S."/>
            <person name="She X."/>
            <person name="Bult C.J."/>
            <person name="Agarwala R."/>
            <person name="Cherry J.L."/>
            <person name="DiCuccio M."/>
            <person name="Hlavina W."/>
            <person name="Kapustin Y."/>
            <person name="Meric P."/>
            <person name="Maglott D."/>
            <person name="Birtle Z."/>
            <person name="Marques A.C."/>
            <person name="Graves T."/>
            <person name="Zhou S."/>
            <person name="Teague B."/>
            <person name="Potamousis K."/>
            <person name="Churas C."/>
            <person name="Place M."/>
            <person name="Herschleb J."/>
            <person name="Runnheim R."/>
            <person name="Forrest D."/>
            <person name="Amos-Landgraf J."/>
            <person name="Schwartz D.C."/>
            <person name="Cheng Z."/>
            <person name="Lindblad-Toh K."/>
            <person name="Eichler E.E."/>
            <person name="Ponting C.P."/>
        </authorList>
    </citation>
    <scope>NUCLEOTIDE SEQUENCE [LARGE SCALE GENOMIC DNA]</scope>
    <source>
        <strain>C57BL/6J</strain>
    </source>
</reference>
<reference key="3">
    <citation type="journal article" date="2004" name="Genome Res.">
        <title>The status, quality, and expansion of the NIH full-length cDNA project: the Mammalian Gene Collection (MGC).</title>
        <authorList>
            <consortium name="The MGC Project Team"/>
        </authorList>
    </citation>
    <scope>NUCLEOTIDE SEQUENCE [LARGE SCALE MRNA]</scope>
    <source>
        <strain>FVB/N</strain>
        <tissue>Mammary tumor</tissue>
    </source>
</reference>
<reference key="4">
    <citation type="journal article" date="2009" name="Immunity">
        <title>The phagosomal proteome in interferon-gamma-activated macrophages.</title>
        <authorList>
            <person name="Trost M."/>
            <person name="English L."/>
            <person name="Lemieux S."/>
            <person name="Courcelles M."/>
            <person name="Desjardins M."/>
            <person name="Thibault P."/>
        </authorList>
    </citation>
    <scope>IDENTIFICATION BY MASS SPECTROMETRY [LARGE SCALE ANALYSIS]</scope>
</reference>
<reference key="5">
    <citation type="journal article" date="2010" name="Cell">
        <title>A tissue-specific atlas of mouse protein phosphorylation and expression.</title>
        <authorList>
            <person name="Huttlin E.L."/>
            <person name="Jedrychowski M.P."/>
            <person name="Elias J.E."/>
            <person name="Goswami T."/>
            <person name="Rad R."/>
            <person name="Beausoleil S.A."/>
            <person name="Villen J."/>
            <person name="Haas W."/>
            <person name="Sowa M.E."/>
            <person name="Gygi S.P."/>
        </authorList>
    </citation>
    <scope>PHOSPHORYLATION [LARGE SCALE ANALYSIS] AT THR-75</scope>
    <scope>IDENTIFICATION BY MASS SPECTROMETRY [LARGE SCALE ANALYSIS]</scope>
    <source>
        <tissue>Brain</tissue>
        <tissue>Brown adipose tissue</tissue>
        <tissue>Heart</tissue>
        <tissue>Kidney</tissue>
        <tissue>Liver</tissue>
        <tissue>Lung</tissue>
        <tissue>Spleen</tissue>
        <tissue>Testis</tissue>
    </source>
</reference>
<reference key="6">
    <citation type="journal article" date="2021" name="Nat. Commun.">
        <title>Lsm12 is an NAADP receptor and a two-pore channel regulatory protein required for calcium mobilization from acidic organelles.</title>
        <authorList>
            <person name="Zhang J."/>
            <person name="Guan X."/>
            <person name="Shah K."/>
            <person name="Yan J."/>
        </authorList>
    </citation>
    <scope>FUNCTION</scope>
</reference>
<feature type="initiator methionine" description="Removed" evidence="1">
    <location>
        <position position="1"/>
    </location>
</feature>
<feature type="chain" id="PRO_0000305127" description="Protein LSM12">
    <location>
        <begin position="2"/>
        <end position="195"/>
    </location>
</feature>
<feature type="domain" description="Sm" evidence="3">
    <location>
        <begin position="2"/>
        <end position="72"/>
    </location>
</feature>
<feature type="domain" description="AD" evidence="2">
    <location>
        <begin position="80"/>
        <end position="174"/>
    </location>
</feature>
<feature type="region of interest" description="Required for NAADP and TPCN2 binding" evidence="1">
    <location>
        <begin position="4"/>
        <end position="67"/>
    </location>
</feature>
<feature type="modified residue" description="N-acetylalanine" evidence="1">
    <location>
        <position position="2"/>
    </location>
</feature>
<feature type="modified residue" description="Phosphothreonine" evidence="5">
    <location>
        <position position="75"/>
    </location>
</feature>
<protein>
    <recommendedName>
        <fullName>Protein LSM12</fullName>
    </recommendedName>
</protein>
<name>LSM12_MOUSE</name>
<gene>
    <name type="primary">Lsm12</name>
</gene>
<evidence type="ECO:0000250" key="1">
    <source>
        <dbReference type="UniProtKB" id="Q3MHD2"/>
    </source>
</evidence>
<evidence type="ECO:0000255" key="2">
    <source>
        <dbReference type="PROSITE-ProRule" id="PRU01345"/>
    </source>
</evidence>
<evidence type="ECO:0000255" key="3">
    <source>
        <dbReference type="PROSITE-ProRule" id="PRU01346"/>
    </source>
</evidence>
<evidence type="ECO:0000305" key="4"/>
<evidence type="ECO:0007744" key="5">
    <source>
    </source>
</evidence>
<dbReference type="EMBL" id="AK011126">
    <property type="protein sequence ID" value="BAB27419.1"/>
    <property type="molecule type" value="mRNA"/>
</dbReference>
<dbReference type="EMBL" id="AK075668">
    <property type="protein sequence ID" value="BAC35885.1"/>
    <property type="molecule type" value="mRNA"/>
</dbReference>
<dbReference type="EMBL" id="AK132889">
    <property type="protein sequence ID" value="BAE21407.1"/>
    <property type="molecule type" value="mRNA"/>
</dbReference>
<dbReference type="EMBL" id="AK151118">
    <property type="protein sequence ID" value="BAE30127.1"/>
    <property type="molecule type" value="mRNA"/>
</dbReference>
<dbReference type="EMBL" id="BX323852">
    <property type="protein sequence ID" value="CAM16076.1"/>
    <property type="molecule type" value="Genomic_DNA"/>
</dbReference>
<dbReference type="EMBL" id="AL954730">
    <property type="protein sequence ID" value="CAM16076.1"/>
    <property type="status" value="JOINED"/>
    <property type="molecule type" value="Genomic_DNA"/>
</dbReference>
<dbReference type="EMBL" id="BX323852">
    <property type="protein sequence ID" value="CAM16077.1"/>
    <property type="status" value="ALT_SEQ"/>
    <property type="molecule type" value="Genomic_DNA"/>
</dbReference>
<dbReference type="EMBL" id="AL954730">
    <property type="protein sequence ID" value="CAM16077.1"/>
    <property type="status" value="JOINED"/>
    <property type="molecule type" value="Genomic_DNA"/>
</dbReference>
<dbReference type="EMBL" id="AL954730">
    <property type="protein sequence ID" value="CAM25068.1"/>
    <property type="molecule type" value="Genomic_DNA"/>
</dbReference>
<dbReference type="EMBL" id="BX323852">
    <property type="protein sequence ID" value="CAM25068.1"/>
    <property type="status" value="JOINED"/>
    <property type="molecule type" value="Genomic_DNA"/>
</dbReference>
<dbReference type="EMBL" id="AL954730">
    <property type="protein sequence ID" value="CAM25069.1"/>
    <property type="status" value="ALT_SEQ"/>
    <property type="molecule type" value="Genomic_DNA"/>
</dbReference>
<dbReference type="EMBL" id="BX323852">
    <property type="protein sequence ID" value="CAM25069.1"/>
    <property type="status" value="JOINED"/>
    <property type="molecule type" value="Genomic_DNA"/>
</dbReference>
<dbReference type="EMBL" id="BC027784">
    <property type="protein sequence ID" value="AAH27784.1"/>
    <property type="molecule type" value="mRNA"/>
</dbReference>
<dbReference type="CCDS" id="CCDS25490.1"/>
<dbReference type="RefSeq" id="NP_766535.1">
    <property type="nucleotide sequence ID" value="NM_172947.3"/>
</dbReference>
<dbReference type="RefSeq" id="XP_006533477.1">
    <property type="nucleotide sequence ID" value="XM_006533414.5"/>
</dbReference>
<dbReference type="BioGRID" id="234509">
    <property type="interactions" value="15"/>
</dbReference>
<dbReference type="FunCoup" id="Q9D0R8">
    <property type="interactions" value="1321"/>
</dbReference>
<dbReference type="IntAct" id="Q9D0R8">
    <property type="interactions" value="1"/>
</dbReference>
<dbReference type="MINT" id="Q9D0R8"/>
<dbReference type="STRING" id="10090.ENSMUSP00000021297"/>
<dbReference type="iPTMnet" id="Q9D0R8"/>
<dbReference type="PhosphoSitePlus" id="Q9D0R8"/>
<dbReference type="SwissPalm" id="Q9D0R8"/>
<dbReference type="jPOST" id="Q9D0R8"/>
<dbReference type="PaxDb" id="10090-ENSMUSP00000021297"/>
<dbReference type="PeptideAtlas" id="Q9D0R8"/>
<dbReference type="ProteomicsDB" id="292045"/>
<dbReference type="Pumba" id="Q9D0R8"/>
<dbReference type="Antibodypedia" id="29665">
    <property type="antibodies" value="91 antibodies from 22 providers"/>
</dbReference>
<dbReference type="DNASU" id="268490"/>
<dbReference type="Ensembl" id="ENSMUST00000021297.6">
    <property type="protein sequence ID" value="ENSMUSP00000021297.6"/>
    <property type="gene ID" value="ENSMUSG00000020922.12"/>
</dbReference>
<dbReference type="GeneID" id="268490"/>
<dbReference type="KEGG" id="mmu:268490"/>
<dbReference type="UCSC" id="uc007lqs.1">
    <property type="organism name" value="mouse"/>
</dbReference>
<dbReference type="AGR" id="MGI:1919592"/>
<dbReference type="CTD" id="124801"/>
<dbReference type="MGI" id="MGI:1919592">
    <property type="gene designation" value="Lsm12"/>
</dbReference>
<dbReference type="VEuPathDB" id="HostDB:ENSMUSG00000020922"/>
<dbReference type="eggNOG" id="KOG4401">
    <property type="taxonomic scope" value="Eukaryota"/>
</dbReference>
<dbReference type="GeneTree" id="ENSGT00390000006956"/>
<dbReference type="HOGENOM" id="CLU_073383_3_0_1"/>
<dbReference type="InParanoid" id="Q9D0R8"/>
<dbReference type="OMA" id="FEGELYC"/>
<dbReference type="OrthoDB" id="1057137at2759"/>
<dbReference type="PhylomeDB" id="Q9D0R8"/>
<dbReference type="TreeFam" id="TF324296"/>
<dbReference type="BioGRID-ORCS" id="268490">
    <property type="hits" value="12 hits in 78 CRISPR screens"/>
</dbReference>
<dbReference type="ChiTaRS" id="Lsm12">
    <property type="organism name" value="mouse"/>
</dbReference>
<dbReference type="PRO" id="PR:Q9D0R8"/>
<dbReference type="Proteomes" id="UP000000589">
    <property type="component" value="Chromosome 11"/>
</dbReference>
<dbReference type="RNAct" id="Q9D0R8">
    <property type="molecule type" value="protein"/>
</dbReference>
<dbReference type="Bgee" id="ENSMUSG00000020922">
    <property type="expression patterns" value="Expressed in interventricular septum and 242 other cell types or tissues"/>
</dbReference>
<dbReference type="ExpressionAtlas" id="Q9D0R8">
    <property type="expression patterns" value="baseline and differential"/>
</dbReference>
<dbReference type="GO" id="GO:0005737">
    <property type="term" value="C:cytoplasm"/>
    <property type="evidence" value="ECO:0000250"/>
    <property type="project" value="UniProtKB"/>
</dbReference>
<dbReference type="GO" id="GO:0003723">
    <property type="term" value="F:RNA binding"/>
    <property type="evidence" value="ECO:0007669"/>
    <property type="project" value="InterPro"/>
</dbReference>
<dbReference type="CDD" id="cd01735">
    <property type="entry name" value="LSm12_N"/>
    <property type="match status" value="1"/>
</dbReference>
<dbReference type="InterPro" id="IPR047574">
    <property type="entry name" value="AD"/>
</dbReference>
<dbReference type="InterPro" id="IPR039683">
    <property type="entry name" value="Lsm12-like"/>
</dbReference>
<dbReference type="InterPro" id="IPR019181">
    <property type="entry name" value="LSM12_ABD"/>
</dbReference>
<dbReference type="InterPro" id="IPR048478">
    <property type="entry name" value="LSM12_LSM"/>
</dbReference>
<dbReference type="InterPro" id="IPR047575">
    <property type="entry name" value="Sm"/>
</dbReference>
<dbReference type="PANTHER" id="PTHR13542">
    <property type="entry name" value="LSM12 HOMOLOG"/>
    <property type="match status" value="1"/>
</dbReference>
<dbReference type="Pfam" id="PF09793">
    <property type="entry name" value="AD"/>
    <property type="match status" value="1"/>
</dbReference>
<dbReference type="Pfam" id="PF21166">
    <property type="entry name" value="LSM12_LSM"/>
    <property type="match status" value="1"/>
</dbReference>
<dbReference type="SMART" id="SM00995">
    <property type="entry name" value="AD"/>
    <property type="match status" value="1"/>
</dbReference>
<dbReference type="PROSITE" id="PS52001">
    <property type="entry name" value="AD"/>
    <property type="match status" value="1"/>
</dbReference>
<dbReference type="PROSITE" id="PS52002">
    <property type="entry name" value="SM"/>
    <property type="match status" value="1"/>
</dbReference>
<comment type="function">
    <text evidence="1">Nicotinic acid adenine dinucleotide phosphate (NAADP) binding protein. Confers NAADP sensitivity to the two pore channel complex (TPCs) by acting as TPC accessory protein necessary for NAADP-evoked Ca(2+) release.</text>
</comment>
<comment type="subunit">
    <text evidence="1">Found in a complex with LSM12, TPCN1 and TPCN2. Interacts with TPCN2.</text>
</comment>
<comment type="subcellular location">
    <subcellularLocation>
        <location evidence="1">Cytoplasm</location>
    </subcellularLocation>
    <text evidence="1">Colocalizes with TPCN2.</text>
</comment>
<comment type="similarity">
    <text evidence="4">Belongs to the LSM12 family.</text>
</comment>
<comment type="sequence caution" evidence="4">
    <conflict type="erroneous gene model prediction">
        <sequence resource="EMBL-CDS" id="CAM16077"/>
    </conflict>
</comment>
<comment type="sequence caution" evidence="4">
    <conflict type="erroneous gene model prediction">
        <sequence resource="EMBL-CDS" id="CAM25069"/>
    </conflict>
</comment>
<proteinExistence type="evidence at protein level"/>
<sequence length="195" mass="21701">MAAPPGEYFSVGSQVSCRTCQEQRLQGEVVAFDYQSKMLALKCPSSSGKPNHADILLINLQYVSEVEIINDRTETPPPLASLNVSKLASKARTEKEEKLSQAYAISAGVSLEGQQLFQTIHKTIKDCKWQEKNIVVMEEVVITPPYQVENCKGKEGSALSHVRKIVEKHFRDVESQKILQRSQAQQPQKEAALSS</sequence>